<reference key="1">
    <citation type="submission" date="2006-01" db="EMBL/GenBank/DDBJ databases">
        <title>Complete sequence of Anaeromyxobacter dehalogenans 2CP-C.</title>
        <authorList>
            <person name="Copeland A."/>
            <person name="Lucas S."/>
            <person name="Lapidus A."/>
            <person name="Barry K."/>
            <person name="Detter J.C."/>
            <person name="Glavina T."/>
            <person name="Hammon N."/>
            <person name="Israni S."/>
            <person name="Pitluck S."/>
            <person name="Brettin T."/>
            <person name="Bruce D."/>
            <person name="Han C."/>
            <person name="Tapia R."/>
            <person name="Gilna P."/>
            <person name="Kiss H."/>
            <person name="Schmutz J."/>
            <person name="Larimer F."/>
            <person name="Land M."/>
            <person name="Kyrpides N."/>
            <person name="Anderson I."/>
            <person name="Sanford R.A."/>
            <person name="Ritalahti K.M."/>
            <person name="Thomas H.S."/>
            <person name="Kirby J.R."/>
            <person name="Zhulin I.B."/>
            <person name="Loeffler F.E."/>
            <person name="Richardson P."/>
        </authorList>
    </citation>
    <scope>NUCLEOTIDE SEQUENCE [LARGE SCALE GENOMIC DNA]</scope>
    <source>
        <strain>2CP-C</strain>
    </source>
</reference>
<comment type="function">
    <text evidence="1">Allows the formation of correctly charged Asn-tRNA(Asn) or Gln-tRNA(Gln) through the transamidation of misacylated Asp-tRNA(Asn) or Glu-tRNA(Gln) in organisms which lack either or both of asparaginyl-tRNA or glutaminyl-tRNA synthetases. The reaction takes place in the presence of glutamine and ATP through an activated phospho-Asp-tRNA(Asn) or phospho-Glu-tRNA(Gln).</text>
</comment>
<comment type="catalytic activity">
    <reaction evidence="1">
        <text>L-glutamyl-tRNA(Gln) + L-glutamine + ATP + H2O = L-glutaminyl-tRNA(Gln) + L-glutamate + ADP + phosphate + H(+)</text>
        <dbReference type="Rhea" id="RHEA:17521"/>
        <dbReference type="Rhea" id="RHEA-COMP:9681"/>
        <dbReference type="Rhea" id="RHEA-COMP:9684"/>
        <dbReference type="ChEBI" id="CHEBI:15377"/>
        <dbReference type="ChEBI" id="CHEBI:15378"/>
        <dbReference type="ChEBI" id="CHEBI:29985"/>
        <dbReference type="ChEBI" id="CHEBI:30616"/>
        <dbReference type="ChEBI" id="CHEBI:43474"/>
        <dbReference type="ChEBI" id="CHEBI:58359"/>
        <dbReference type="ChEBI" id="CHEBI:78520"/>
        <dbReference type="ChEBI" id="CHEBI:78521"/>
        <dbReference type="ChEBI" id="CHEBI:456216"/>
    </reaction>
</comment>
<comment type="catalytic activity">
    <reaction evidence="1">
        <text>L-aspartyl-tRNA(Asn) + L-glutamine + ATP + H2O = L-asparaginyl-tRNA(Asn) + L-glutamate + ADP + phosphate + 2 H(+)</text>
        <dbReference type="Rhea" id="RHEA:14513"/>
        <dbReference type="Rhea" id="RHEA-COMP:9674"/>
        <dbReference type="Rhea" id="RHEA-COMP:9677"/>
        <dbReference type="ChEBI" id="CHEBI:15377"/>
        <dbReference type="ChEBI" id="CHEBI:15378"/>
        <dbReference type="ChEBI" id="CHEBI:29985"/>
        <dbReference type="ChEBI" id="CHEBI:30616"/>
        <dbReference type="ChEBI" id="CHEBI:43474"/>
        <dbReference type="ChEBI" id="CHEBI:58359"/>
        <dbReference type="ChEBI" id="CHEBI:78515"/>
        <dbReference type="ChEBI" id="CHEBI:78516"/>
        <dbReference type="ChEBI" id="CHEBI:456216"/>
    </reaction>
</comment>
<comment type="subunit">
    <text evidence="1">Heterotrimer of A, B and C subunits.</text>
</comment>
<comment type="similarity">
    <text evidence="1">Belongs to the GatB/GatE family. GatB subfamily.</text>
</comment>
<organism>
    <name type="scientific">Anaeromyxobacter dehalogenans (strain 2CP-C)</name>
    <dbReference type="NCBI Taxonomy" id="290397"/>
    <lineage>
        <taxon>Bacteria</taxon>
        <taxon>Pseudomonadati</taxon>
        <taxon>Myxococcota</taxon>
        <taxon>Myxococcia</taxon>
        <taxon>Myxococcales</taxon>
        <taxon>Cystobacterineae</taxon>
        <taxon>Anaeromyxobacteraceae</taxon>
        <taxon>Anaeromyxobacter</taxon>
    </lineage>
</organism>
<name>GATB_ANADE</name>
<protein>
    <recommendedName>
        <fullName evidence="1">Aspartyl/glutamyl-tRNA(Asn/Gln) amidotransferase subunit B</fullName>
        <shortName evidence="1">Asp/Glu-ADT subunit B</shortName>
        <ecNumber evidence="1">6.3.5.-</ecNumber>
    </recommendedName>
</protein>
<evidence type="ECO:0000255" key="1">
    <source>
        <dbReference type="HAMAP-Rule" id="MF_00121"/>
    </source>
</evidence>
<dbReference type="EC" id="6.3.5.-" evidence="1"/>
<dbReference type="EMBL" id="CP000251">
    <property type="protein sequence ID" value="ABC83951.1"/>
    <property type="molecule type" value="Genomic_DNA"/>
</dbReference>
<dbReference type="RefSeq" id="WP_011423233.1">
    <property type="nucleotide sequence ID" value="NC_007760.1"/>
</dbReference>
<dbReference type="SMR" id="Q2IH95"/>
<dbReference type="STRING" id="290397.Adeh_4187"/>
<dbReference type="KEGG" id="ade:Adeh_4187"/>
<dbReference type="eggNOG" id="COG0064">
    <property type="taxonomic scope" value="Bacteria"/>
</dbReference>
<dbReference type="HOGENOM" id="CLU_019240_0_0_7"/>
<dbReference type="OrthoDB" id="9804078at2"/>
<dbReference type="Proteomes" id="UP000001935">
    <property type="component" value="Chromosome"/>
</dbReference>
<dbReference type="GO" id="GO:0050566">
    <property type="term" value="F:asparaginyl-tRNA synthase (glutamine-hydrolyzing) activity"/>
    <property type="evidence" value="ECO:0007669"/>
    <property type="project" value="RHEA"/>
</dbReference>
<dbReference type="GO" id="GO:0005524">
    <property type="term" value="F:ATP binding"/>
    <property type="evidence" value="ECO:0007669"/>
    <property type="project" value="UniProtKB-KW"/>
</dbReference>
<dbReference type="GO" id="GO:0050567">
    <property type="term" value="F:glutaminyl-tRNA synthase (glutamine-hydrolyzing) activity"/>
    <property type="evidence" value="ECO:0007669"/>
    <property type="project" value="UniProtKB-UniRule"/>
</dbReference>
<dbReference type="GO" id="GO:0070681">
    <property type="term" value="P:glutaminyl-tRNAGln biosynthesis via transamidation"/>
    <property type="evidence" value="ECO:0007669"/>
    <property type="project" value="TreeGrafter"/>
</dbReference>
<dbReference type="GO" id="GO:0006412">
    <property type="term" value="P:translation"/>
    <property type="evidence" value="ECO:0007669"/>
    <property type="project" value="UniProtKB-UniRule"/>
</dbReference>
<dbReference type="FunFam" id="1.10.10.410:FF:000001">
    <property type="entry name" value="Aspartyl/glutamyl-tRNA(Asn/Gln) amidotransferase subunit B"/>
    <property type="match status" value="1"/>
</dbReference>
<dbReference type="Gene3D" id="1.10.10.410">
    <property type="match status" value="1"/>
</dbReference>
<dbReference type="Gene3D" id="1.10.150.380">
    <property type="entry name" value="GatB domain, N-terminal subdomain"/>
    <property type="match status" value="1"/>
</dbReference>
<dbReference type="HAMAP" id="MF_00121">
    <property type="entry name" value="GatB"/>
    <property type="match status" value="1"/>
</dbReference>
<dbReference type="InterPro" id="IPR017959">
    <property type="entry name" value="Asn/Gln-tRNA_amidoTrfase_suB/E"/>
</dbReference>
<dbReference type="InterPro" id="IPR006075">
    <property type="entry name" value="Asn/Gln-tRNA_Trfase_suB/E_cat"/>
</dbReference>
<dbReference type="InterPro" id="IPR018027">
    <property type="entry name" value="Asn/Gln_amidotransferase"/>
</dbReference>
<dbReference type="InterPro" id="IPR003789">
    <property type="entry name" value="Asn/Gln_tRNA_amidoTrase-B-like"/>
</dbReference>
<dbReference type="InterPro" id="IPR004413">
    <property type="entry name" value="GatB"/>
</dbReference>
<dbReference type="InterPro" id="IPR042114">
    <property type="entry name" value="GatB_C_1"/>
</dbReference>
<dbReference type="InterPro" id="IPR023168">
    <property type="entry name" value="GatB_Yqey_C_2"/>
</dbReference>
<dbReference type="InterPro" id="IPR017958">
    <property type="entry name" value="Gln-tRNA_amidoTrfase_suB_CS"/>
</dbReference>
<dbReference type="InterPro" id="IPR014746">
    <property type="entry name" value="Gln_synth/guanido_kin_cat_dom"/>
</dbReference>
<dbReference type="NCBIfam" id="TIGR00133">
    <property type="entry name" value="gatB"/>
    <property type="match status" value="1"/>
</dbReference>
<dbReference type="NCBIfam" id="NF004012">
    <property type="entry name" value="PRK05477.1-2"/>
    <property type="match status" value="1"/>
</dbReference>
<dbReference type="NCBIfam" id="NF004014">
    <property type="entry name" value="PRK05477.1-4"/>
    <property type="match status" value="1"/>
</dbReference>
<dbReference type="NCBIfam" id="NF004015">
    <property type="entry name" value="PRK05477.1-5"/>
    <property type="match status" value="1"/>
</dbReference>
<dbReference type="PANTHER" id="PTHR11659">
    <property type="entry name" value="GLUTAMYL-TRNA GLN AMIDOTRANSFERASE SUBUNIT B MITOCHONDRIAL AND PROKARYOTIC PET112-RELATED"/>
    <property type="match status" value="1"/>
</dbReference>
<dbReference type="PANTHER" id="PTHR11659:SF0">
    <property type="entry name" value="GLUTAMYL-TRNA(GLN) AMIDOTRANSFERASE SUBUNIT B, MITOCHONDRIAL"/>
    <property type="match status" value="1"/>
</dbReference>
<dbReference type="Pfam" id="PF02934">
    <property type="entry name" value="GatB_N"/>
    <property type="match status" value="1"/>
</dbReference>
<dbReference type="Pfam" id="PF02637">
    <property type="entry name" value="GatB_Yqey"/>
    <property type="match status" value="1"/>
</dbReference>
<dbReference type="SMART" id="SM00845">
    <property type="entry name" value="GatB_Yqey"/>
    <property type="match status" value="1"/>
</dbReference>
<dbReference type="SUPFAM" id="SSF89095">
    <property type="entry name" value="GatB/YqeY motif"/>
    <property type="match status" value="1"/>
</dbReference>
<dbReference type="SUPFAM" id="SSF55931">
    <property type="entry name" value="Glutamine synthetase/guanido kinase"/>
    <property type="match status" value="1"/>
</dbReference>
<dbReference type="PROSITE" id="PS01234">
    <property type="entry name" value="GATB"/>
    <property type="match status" value="1"/>
</dbReference>
<feature type="chain" id="PRO_0000241187" description="Aspartyl/glutamyl-tRNA(Asn/Gln) amidotransferase subunit B">
    <location>
        <begin position="1"/>
        <end position="484"/>
    </location>
</feature>
<sequence length="484" mass="52068">MPISDFQVVIGLEVHAQLLTASKIFCGCSTAFGGAPNAHTCPVCLGLPGALPALNRSVVEMAVRTGLALGCEIRPKSVFARKNYFYPDLPKGYQISQYELPICEGGEVTFTLDGRDHTARLVRIHMEEDAGKNVHDVAADGSSGVDLNRAGVPLVEIVSRPDLRSAEEAVEYLKALRAILMALGVNDGNMQEGSLRCDANVSVMRKGASELGTRCEIKNMNSFRFLKQAIEFEARRQVELIEAGEPVVQETRLFDPDRGETRSMRSKEEAHDYRYFPEPDLPPVIVEAALVERLRGELPELPRAKAERYQRSLGLSAQDAGNLVADAAVSAWFDAAVAAYGAGPEAAKKVANWVIGELARLANETGEAPAAWKLTPARLAAVLRLIDAGTIGGPGAKQVVEEVFRTGAEPDAVVKAKGLAQVSDEGAIEAAVDKVLAANPGEVEKYRGGRKNLVGFFVGQVMKEMRGKGNPAVVNALLRRKLGD</sequence>
<gene>
    <name evidence="1" type="primary">gatB</name>
    <name type="ordered locus">Adeh_4187</name>
</gene>
<proteinExistence type="inferred from homology"/>
<accession>Q2IH95</accession>
<keyword id="KW-0067">ATP-binding</keyword>
<keyword id="KW-0436">Ligase</keyword>
<keyword id="KW-0547">Nucleotide-binding</keyword>
<keyword id="KW-0648">Protein biosynthesis</keyword>
<keyword id="KW-1185">Reference proteome</keyword>